<comment type="function">
    <text evidence="1">Reversibly transfers an adenylyl group from ATP to 4'-phosphopantetheine, yielding dephospho-CoA (dPCoA) and pyrophosphate.</text>
</comment>
<comment type="catalytic activity">
    <reaction evidence="1">
        <text>(R)-4'-phosphopantetheine + ATP + H(+) = 3'-dephospho-CoA + diphosphate</text>
        <dbReference type="Rhea" id="RHEA:19801"/>
        <dbReference type="ChEBI" id="CHEBI:15378"/>
        <dbReference type="ChEBI" id="CHEBI:30616"/>
        <dbReference type="ChEBI" id="CHEBI:33019"/>
        <dbReference type="ChEBI" id="CHEBI:57328"/>
        <dbReference type="ChEBI" id="CHEBI:61723"/>
        <dbReference type="EC" id="2.7.7.3"/>
    </reaction>
</comment>
<comment type="cofactor">
    <cofactor evidence="1">
        <name>Mg(2+)</name>
        <dbReference type="ChEBI" id="CHEBI:18420"/>
    </cofactor>
</comment>
<comment type="pathway">
    <text evidence="1">Cofactor biosynthesis; coenzyme A biosynthesis; CoA from (R)-pantothenate: step 4/5.</text>
</comment>
<comment type="subunit">
    <text evidence="1">Homohexamer.</text>
</comment>
<comment type="subcellular location">
    <subcellularLocation>
        <location evidence="1">Cytoplasm</location>
    </subcellularLocation>
</comment>
<comment type="similarity">
    <text evidence="1">Belongs to the bacterial CoaD family.</text>
</comment>
<sequence>MQKRAIYPGTFDPITNGHIDIVTRATQMFDHVILAIAASPSKKPMFTLEERVALAQQATAHLGNVEVVGFSDLMANFARNQHATVLIRGLRAVADFEYEMQLAHMNRHLMPELESVFLMPSKEWSFISSSLVKEVARHQGDVTHFLPENVHQALMAKLA</sequence>
<accession>P0A6I8</accession>
<accession>P23875</accession>
<protein>
    <recommendedName>
        <fullName evidence="1">Phosphopantetheine adenylyltransferase</fullName>
        <ecNumber evidence="1">2.7.7.3</ecNumber>
    </recommendedName>
    <alternativeName>
        <fullName evidence="1">Dephospho-CoA pyrophosphorylase</fullName>
    </alternativeName>
    <alternativeName>
        <fullName evidence="1">Pantetheine-phosphate adenylyltransferase</fullName>
        <shortName evidence="1">PPAT</shortName>
    </alternativeName>
</protein>
<proteinExistence type="inferred from homology"/>
<organism>
    <name type="scientific">Shigella flexneri</name>
    <dbReference type="NCBI Taxonomy" id="623"/>
    <lineage>
        <taxon>Bacteria</taxon>
        <taxon>Pseudomonadati</taxon>
        <taxon>Pseudomonadota</taxon>
        <taxon>Gammaproteobacteria</taxon>
        <taxon>Enterobacterales</taxon>
        <taxon>Enterobacteriaceae</taxon>
        <taxon>Shigella</taxon>
    </lineage>
</organism>
<dbReference type="EC" id="2.7.7.3" evidence="1"/>
<dbReference type="EMBL" id="AE005674">
    <property type="protein sequence ID" value="AAN45120.1"/>
    <property type="molecule type" value="Genomic_DNA"/>
</dbReference>
<dbReference type="EMBL" id="AE014073">
    <property type="protein sequence ID" value="AAP19072.1"/>
    <property type="molecule type" value="Genomic_DNA"/>
</dbReference>
<dbReference type="RefSeq" id="NP_709413.1">
    <property type="nucleotide sequence ID" value="NC_004337.2"/>
</dbReference>
<dbReference type="RefSeq" id="WP_001171866.1">
    <property type="nucleotide sequence ID" value="NZ_WPGW01000042.1"/>
</dbReference>
<dbReference type="SMR" id="P0A6I8"/>
<dbReference type="STRING" id="198214.SF3673"/>
<dbReference type="DrugBank" id="DB01992">
    <property type="generic name" value="Coenzyme A"/>
</dbReference>
<dbReference type="DrugBank" id="DB03912">
    <property type="generic name" value="D-pantetheine 4'-phosphate"/>
</dbReference>
<dbReference type="DrugBank" id="DB03170">
    <property type="generic name" value="Dephospho Coenzyme A"/>
</dbReference>
<dbReference type="PaxDb" id="198214-SF3673"/>
<dbReference type="GeneID" id="1026203"/>
<dbReference type="GeneID" id="75202203"/>
<dbReference type="KEGG" id="sfl:SF3673"/>
<dbReference type="KEGG" id="sfx:S4095"/>
<dbReference type="PATRIC" id="fig|198214.7.peg.4336"/>
<dbReference type="HOGENOM" id="CLU_100149_0_1_6"/>
<dbReference type="UniPathway" id="UPA00241">
    <property type="reaction ID" value="UER00355"/>
</dbReference>
<dbReference type="Proteomes" id="UP000001006">
    <property type="component" value="Chromosome"/>
</dbReference>
<dbReference type="Proteomes" id="UP000002673">
    <property type="component" value="Chromosome"/>
</dbReference>
<dbReference type="GO" id="GO:0005737">
    <property type="term" value="C:cytoplasm"/>
    <property type="evidence" value="ECO:0007669"/>
    <property type="project" value="UniProtKB-SubCell"/>
</dbReference>
<dbReference type="GO" id="GO:0005524">
    <property type="term" value="F:ATP binding"/>
    <property type="evidence" value="ECO:0007669"/>
    <property type="project" value="UniProtKB-KW"/>
</dbReference>
<dbReference type="GO" id="GO:0004595">
    <property type="term" value="F:pantetheine-phosphate adenylyltransferase activity"/>
    <property type="evidence" value="ECO:0007669"/>
    <property type="project" value="UniProtKB-UniRule"/>
</dbReference>
<dbReference type="GO" id="GO:0015937">
    <property type="term" value="P:coenzyme A biosynthetic process"/>
    <property type="evidence" value="ECO:0007669"/>
    <property type="project" value="UniProtKB-UniRule"/>
</dbReference>
<dbReference type="CDD" id="cd02163">
    <property type="entry name" value="PPAT"/>
    <property type="match status" value="1"/>
</dbReference>
<dbReference type="FunFam" id="3.40.50.620:FF:000012">
    <property type="entry name" value="Phosphopantetheine adenylyltransferase"/>
    <property type="match status" value="1"/>
</dbReference>
<dbReference type="Gene3D" id="3.40.50.620">
    <property type="entry name" value="HUPs"/>
    <property type="match status" value="1"/>
</dbReference>
<dbReference type="HAMAP" id="MF_00151">
    <property type="entry name" value="PPAT_bact"/>
    <property type="match status" value="1"/>
</dbReference>
<dbReference type="InterPro" id="IPR004821">
    <property type="entry name" value="Cyt_trans-like"/>
</dbReference>
<dbReference type="InterPro" id="IPR001980">
    <property type="entry name" value="PPAT"/>
</dbReference>
<dbReference type="InterPro" id="IPR014729">
    <property type="entry name" value="Rossmann-like_a/b/a_fold"/>
</dbReference>
<dbReference type="NCBIfam" id="TIGR01510">
    <property type="entry name" value="coaD_prev_kdtB"/>
    <property type="match status" value="1"/>
</dbReference>
<dbReference type="NCBIfam" id="TIGR00125">
    <property type="entry name" value="cyt_tran_rel"/>
    <property type="match status" value="1"/>
</dbReference>
<dbReference type="PANTHER" id="PTHR21342">
    <property type="entry name" value="PHOSPHOPANTETHEINE ADENYLYLTRANSFERASE"/>
    <property type="match status" value="1"/>
</dbReference>
<dbReference type="PANTHER" id="PTHR21342:SF1">
    <property type="entry name" value="PHOSPHOPANTETHEINE ADENYLYLTRANSFERASE"/>
    <property type="match status" value="1"/>
</dbReference>
<dbReference type="Pfam" id="PF01467">
    <property type="entry name" value="CTP_transf_like"/>
    <property type="match status" value="1"/>
</dbReference>
<dbReference type="PRINTS" id="PR01020">
    <property type="entry name" value="LPSBIOSNTHSS"/>
</dbReference>
<dbReference type="SUPFAM" id="SSF52374">
    <property type="entry name" value="Nucleotidylyl transferase"/>
    <property type="match status" value="1"/>
</dbReference>
<evidence type="ECO:0000255" key="1">
    <source>
        <dbReference type="HAMAP-Rule" id="MF_00151"/>
    </source>
</evidence>
<feature type="chain" id="PRO_0000156270" description="Phosphopantetheine adenylyltransferase">
    <location>
        <begin position="1"/>
        <end position="159"/>
    </location>
</feature>
<feature type="binding site" evidence="1">
    <location>
        <begin position="10"/>
        <end position="11"/>
    </location>
    <ligand>
        <name>ATP</name>
        <dbReference type="ChEBI" id="CHEBI:30616"/>
    </ligand>
</feature>
<feature type="binding site" evidence="1">
    <location>
        <position position="10"/>
    </location>
    <ligand>
        <name>substrate</name>
    </ligand>
</feature>
<feature type="binding site" evidence="1">
    <location>
        <position position="18"/>
    </location>
    <ligand>
        <name>ATP</name>
        <dbReference type="ChEBI" id="CHEBI:30616"/>
    </ligand>
</feature>
<feature type="binding site" evidence="1">
    <location>
        <position position="42"/>
    </location>
    <ligand>
        <name>substrate</name>
    </ligand>
</feature>
<feature type="binding site" evidence="1">
    <location>
        <position position="74"/>
    </location>
    <ligand>
        <name>substrate</name>
    </ligand>
</feature>
<feature type="binding site" evidence="1">
    <location>
        <position position="88"/>
    </location>
    <ligand>
        <name>substrate</name>
    </ligand>
</feature>
<feature type="binding site" evidence="1">
    <location>
        <begin position="89"/>
        <end position="91"/>
    </location>
    <ligand>
        <name>ATP</name>
        <dbReference type="ChEBI" id="CHEBI:30616"/>
    </ligand>
</feature>
<feature type="binding site" evidence="1">
    <location>
        <position position="99"/>
    </location>
    <ligand>
        <name>ATP</name>
        <dbReference type="ChEBI" id="CHEBI:30616"/>
    </ligand>
</feature>
<feature type="binding site" evidence="1">
    <location>
        <begin position="124"/>
        <end position="130"/>
    </location>
    <ligand>
        <name>ATP</name>
        <dbReference type="ChEBI" id="CHEBI:30616"/>
    </ligand>
</feature>
<feature type="site" description="Transition state stabilizer" evidence="1">
    <location>
        <position position="18"/>
    </location>
</feature>
<gene>
    <name evidence="1" type="primary">coaD</name>
    <name type="synonym">kdtB</name>
    <name type="ordered locus">SF3673</name>
    <name type="ordered locus">S4095</name>
</gene>
<keyword id="KW-0067">ATP-binding</keyword>
<keyword id="KW-0173">Coenzyme A biosynthesis</keyword>
<keyword id="KW-0963">Cytoplasm</keyword>
<keyword id="KW-0460">Magnesium</keyword>
<keyword id="KW-0547">Nucleotide-binding</keyword>
<keyword id="KW-0548">Nucleotidyltransferase</keyword>
<keyword id="KW-1185">Reference proteome</keyword>
<keyword id="KW-0808">Transferase</keyword>
<name>COAD_SHIFL</name>
<reference key="1">
    <citation type="journal article" date="2002" name="Nucleic Acids Res.">
        <title>Genome sequence of Shigella flexneri 2a: insights into pathogenicity through comparison with genomes of Escherichia coli K12 and O157.</title>
        <authorList>
            <person name="Jin Q."/>
            <person name="Yuan Z."/>
            <person name="Xu J."/>
            <person name="Wang Y."/>
            <person name="Shen Y."/>
            <person name="Lu W."/>
            <person name="Wang J."/>
            <person name="Liu H."/>
            <person name="Yang J."/>
            <person name="Yang F."/>
            <person name="Zhang X."/>
            <person name="Zhang J."/>
            <person name="Yang G."/>
            <person name="Wu H."/>
            <person name="Qu D."/>
            <person name="Dong J."/>
            <person name="Sun L."/>
            <person name="Xue Y."/>
            <person name="Zhao A."/>
            <person name="Gao Y."/>
            <person name="Zhu J."/>
            <person name="Kan B."/>
            <person name="Ding K."/>
            <person name="Chen S."/>
            <person name="Cheng H."/>
            <person name="Yao Z."/>
            <person name="He B."/>
            <person name="Chen R."/>
            <person name="Ma D."/>
            <person name="Qiang B."/>
            <person name="Wen Y."/>
            <person name="Hou Y."/>
            <person name="Yu J."/>
        </authorList>
    </citation>
    <scope>NUCLEOTIDE SEQUENCE [LARGE SCALE GENOMIC DNA]</scope>
    <source>
        <strain>301 / Serotype 2a</strain>
    </source>
</reference>
<reference key="2">
    <citation type="journal article" date="2003" name="Infect. Immun.">
        <title>Complete genome sequence and comparative genomics of Shigella flexneri serotype 2a strain 2457T.</title>
        <authorList>
            <person name="Wei J."/>
            <person name="Goldberg M.B."/>
            <person name="Burland V."/>
            <person name="Venkatesan M.M."/>
            <person name="Deng W."/>
            <person name="Fournier G."/>
            <person name="Mayhew G.F."/>
            <person name="Plunkett G. III"/>
            <person name="Rose D.J."/>
            <person name="Darling A."/>
            <person name="Mau B."/>
            <person name="Perna N.T."/>
            <person name="Payne S.M."/>
            <person name="Runyen-Janecky L.J."/>
            <person name="Zhou S."/>
            <person name="Schwartz D.C."/>
            <person name="Blattner F.R."/>
        </authorList>
    </citation>
    <scope>NUCLEOTIDE SEQUENCE [LARGE SCALE GENOMIC DNA]</scope>
    <source>
        <strain>ATCC 700930 / 2457T / Serotype 2a</strain>
    </source>
</reference>